<sequence length="133" mass="13991">MAKASTSGASRVRKKVKKNVSDGIAHVHASFNNTIITITDRQGNALSWATSGGAGFKGSRKSTPFAAQVAAETAGRVAMEYGIKTLEVRIKGPGPGRESSVRALNALGIKISSIADITPVPHNGCRPPKRRRI</sequence>
<reference key="1">
    <citation type="journal article" date="2006" name="J. Bacteriol.">
        <title>Comparison of the genome sequence of the poultry pathogen Bordetella avium with those of B. bronchiseptica, B. pertussis, and B. parapertussis reveals extensive diversity in surface structures associated with host interaction.</title>
        <authorList>
            <person name="Sebaihia M."/>
            <person name="Preston A."/>
            <person name="Maskell D.J."/>
            <person name="Kuzmiak H."/>
            <person name="Connell T.D."/>
            <person name="King N.D."/>
            <person name="Orndorff P.E."/>
            <person name="Miyamoto D.M."/>
            <person name="Thomson N.R."/>
            <person name="Harris D."/>
            <person name="Goble A."/>
            <person name="Lord A."/>
            <person name="Murphy L."/>
            <person name="Quail M.A."/>
            <person name="Rutter S."/>
            <person name="Squares R."/>
            <person name="Squares S."/>
            <person name="Woodward J."/>
            <person name="Parkhill J."/>
            <person name="Temple L.M."/>
        </authorList>
    </citation>
    <scope>NUCLEOTIDE SEQUENCE [LARGE SCALE GENOMIC DNA]</scope>
    <source>
        <strain>197N</strain>
    </source>
</reference>
<proteinExistence type="inferred from homology"/>
<evidence type="ECO:0000255" key="1">
    <source>
        <dbReference type="HAMAP-Rule" id="MF_01310"/>
    </source>
</evidence>
<evidence type="ECO:0000305" key="2"/>
<comment type="function">
    <text evidence="1">Located on the platform of the 30S subunit, it bridges several disparate RNA helices of the 16S rRNA. Forms part of the Shine-Dalgarno cleft in the 70S ribosome.</text>
</comment>
<comment type="subunit">
    <text evidence="1">Part of the 30S ribosomal subunit. Interacts with proteins S7 and S18. Binds to IF-3.</text>
</comment>
<comment type="similarity">
    <text evidence="1">Belongs to the universal ribosomal protein uS11 family.</text>
</comment>
<organism>
    <name type="scientific">Bordetella avium (strain 197N)</name>
    <dbReference type="NCBI Taxonomy" id="360910"/>
    <lineage>
        <taxon>Bacteria</taxon>
        <taxon>Pseudomonadati</taxon>
        <taxon>Pseudomonadota</taxon>
        <taxon>Betaproteobacteria</taxon>
        <taxon>Burkholderiales</taxon>
        <taxon>Alcaligenaceae</taxon>
        <taxon>Bordetella</taxon>
    </lineage>
</organism>
<feature type="chain" id="PRO_0000294722" description="Small ribosomal subunit protein uS11">
    <location>
        <begin position="1"/>
        <end position="133"/>
    </location>
</feature>
<dbReference type="EMBL" id="AM167904">
    <property type="protein sequence ID" value="CAJ47642.1"/>
    <property type="molecule type" value="Genomic_DNA"/>
</dbReference>
<dbReference type="RefSeq" id="WP_003806930.1">
    <property type="nucleotide sequence ID" value="NC_010645.1"/>
</dbReference>
<dbReference type="SMR" id="Q2L245"/>
<dbReference type="STRING" id="360910.BAV0058"/>
<dbReference type="GeneID" id="93206285"/>
<dbReference type="KEGG" id="bav:BAV0058"/>
<dbReference type="eggNOG" id="COG0100">
    <property type="taxonomic scope" value="Bacteria"/>
</dbReference>
<dbReference type="HOGENOM" id="CLU_072439_5_0_4"/>
<dbReference type="OrthoDB" id="9806415at2"/>
<dbReference type="Proteomes" id="UP000001977">
    <property type="component" value="Chromosome"/>
</dbReference>
<dbReference type="GO" id="GO:1990904">
    <property type="term" value="C:ribonucleoprotein complex"/>
    <property type="evidence" value="ECO:0007669"/>
    <property type="project" value="UniProtKB-KW"/>
</dbReference>
<dbReference type="GO" id="GO:0005840">
    <property type="term" value="C:ribosome"/>
    <property type="evidence" value="ECO:0007669"/>
    <property type="project" value="UniProtKB-KW"/>
</dbReference>
<dbReference type="GO" id="GO:0019843">
    <property type="term" value="F:rRNA binding"/>
    <property type="evidence" value="ECO:0007669"/>
    <property type="project" value="UniProtKB-UniRule"/>
</dbReference>
<dbReference type="GO" id="GO:0003735">
    <property type="term" value="F:structural constituent of ribosome"/>
    <property type="evidence" value="ECO:0007669"/>
    <property type="project" value="InterPro"/>
</dbReference>
<dbReference type="GO" id="GO:0006412">
    <property type="term" value="P:translation"/>
    <property type="evidence" value="ECO:0007669"/>
    <property type="project" value="UniProtKB-UniRule"/>
</dbReference>
<dbReference type="FunFam" id="3.30.420.80:FF:000001">
    <property type="entry name" value="30S ribosomal protein S11"/>
    <property type="match status" value="1"/>
</dbReference>
<dbReference type="Gene3D" id="3.30.420.80">
    <property type="entry name" value="Ribosomal protein S11"/>
    <property type="match status" value="1"/>
</dbReference>
<dbReference type="HAMAP" id="MF_01310">
    <property type="entry name" value="Ribosomal_uS11"/>
    <property type="match status" value="1"/>
</dbReference>
<dbReference type="InterPro" id="IPR001971">
    <property type="entry name" value="Ribosomal_uS11"/>
</dbReference>
<dbReference type="InterPro" id="IPR019981">
    <property type="entry name" value="Ribosomal_uS11_bac-type"/>
</dbReference>
<dbReference type="InterPro" id="IPR018102">
    <property type="entry name" value="Ribosomal_uS11_CS"/>
</dbReference>
<dbReference type="InterPro" id="IPR036967">
    <property type="entry name" value="Ribosomal_uS11_sf"/>
</dbReference>
<dbReference type="NCBIfam" id="NF003698">
    <property type="entry name" value="PRK05309.1"/>
    <property type="match status" value="1"/>
</dbReference>
<dbReference type="NCBIfam" id="TIGR03632">
    <property type="entry name" value="uS11_bact"/>
    <property type="match status" value="1"/>
</dbReference>
<dbReference type="PANTHER" id="PTHR11759">
    <property type="entry name" value="40S RIBOSOMAL PROTEIN S14/30S RIBOSOMAL PROTEIN S11"/>
    <property type="match status" value="1"/>
</dbReference>
<dbReference type="Pfam" id="PF00411">
    <property type="entry name" value="Ribosomal_S11"/>
    <property type="match status" value="1"/>
</dbReference>
<dbReference type="PIRSF" id="PIRSF002131">
    <property type="entry name" value="Ribosomal_S11"/>
    <property type="match status" value="1"/>
</dbReference>
<dbReference type="SUPFAM" id="SSF53137">
    <property type="entry name" value="Translational machinery components"/>
    <property type="match status" value="1"/>
</dbReference>
<dbReference type="PROSITE" id="PS00054">
    <property type="entry name" value="RIBOSOMAL_S11"/>
    <property type="match status" value="1"/>
</dbReference>
<gene>
    <name evidence="1" type="primary">rpsK</name>
    <name type="ordered locus">BAV0058</name>
</gene>
<protein>
    <recommendedName>
        <fullName evidence="1">Small ribosomal subunit protein uS11</fullName>
    </recommendedName>
    <alternativeName>
        <fullName evidence="2">30S ribosomal protein S11</fullName>
    </alternativeName>
</protein>
<accession>Q2L245</accession>
<keyword id="KW-1185">Reference proteome</keyword>
<keyword id="KW-0687">Ribonucleoprotein</keyword>
<keyword id="KW-0689">Ribosomal protein</keyword>
<keyword id="KW-0694">RNA-binding</keyword>
<keyword id="KW-0699">rRNA-binding</keyword>
<name>RS11_BORA1</name>